<organism>
    <name type="scientific">Mycobacterium sp. (strain JLS)</name>
    <dbReference type="NCBI Taxonomy" id="164757"/>
    <lineage>
        <taxon>Bacteria</taxon>
        <taxon>Bacillati</taxon>
        <taxon>Actinomycetota</taxon>
        <taxon>Actinomycetes</taxon>
        <taxon>Mycobacteriales</taxon>
        <taxon>Mycobacteriaceae</taxon>
        <taxon>Mycobacterium</taxon>
    </lineage>
</organism>
<reference key="1">
    <citation type="submission" date="2007-02" db="EMBL/GenBank/DDBJ databases">
        <title>Complete sequence of Mycobacterium sp. JLS.</title>
        <authorList>
            <consortium name="US DOE Joint Genome Institute"/>
            <person name="Copeland A."/>
            <person name="Lucas S."/>
            <person name="Lapidus A."/>
            <person name="Barry K."/>
            <person name="Detter J.C."/>
            <person name="Glavina del Rio T."/>
            <person name="Hammon N."/>
            <person name="Israni S."/>
            <person name="Dalin E."/>
            <person name="Tice H."/>
            <person name="Pitluck S."/>
            <person name="Chain P."/>
            <person name="Malfatti S."/>
            <person name="Shin M."/>
            <person name="Vergez L."/>
            <person name="Schmutz J."/>
            <person name="Larimer F."/>
            <person name="Land M."/>
            <person name="Hauser L."/>
            <person name="Kyrpides N."/>
            <person name="Mikhailova N."/>
            <person name="Miller C.D."/>
            <person name="Anderson A.J."/>
            <person name="Sims R.C."/>
            <person name="Richardson P."/>
        </authorList>
    </citation>
    <scope>NUCLEOTIDE SEQUENCE [LARGE SCALE GENOMIC DNA]</scope>
    <source>
        <strain>JLS</strain>
    </source>
</reference>
<accession>A3PTZ8</accession>
<gene>
    <name type="ordered locus">Mjls_0563</name>
</gene>
<proteinExistence type="inferred from homology"/>
<protein>
    <recommendedName>
        <fullName evidence="1">Putative glutamate--cysteine ligase 2-1</fullName>
        <ecNumber evidence="1">6.3.2.2</ecNumber>
    </recommendedName>
    <alternativeName>
        <fullName evidence="1">Gamma-glutamylcysteine synthetase 2-1</fullName>
        <shortName evidence="1">GCS 2-1</shortName>
        <shortName evidence="1">Gamma-GCS 2-1</shortName>
    </alternativeName>
</protein>
<evidence type="ECO:0000255" key="1">
    <source>
        <dbReference type="HAMAP-Rule" id="MF_01609"/>
    </source>
</evidence>
<feature type="chain" id="PRO_0000291495" description="Putative glutamate--cysteine ligase 2-1">
    <location>
        <begin position="1"/>
        <end position="376"/>
    </location>
</feature>
<dbReference type="EC" id="6.3.2.2" evidence="1"/>
<dbReference type="EMBL" id="CP000580">
    <property type="protein sequence ID" value="ABN96375.1"/>
    <property type="molecule type" value="Genomic_DNA"/>
</dbReference>
<dbReference type="SMR" id="A3PTZ8"/>
<dbReference type="KEGG" id="mjl:Mjls_0563"/>
<dbReference type="HOGENOM" id="CLU_044848_1_0_11"/>
<dbReference type="BioCyc" id="MSP164757:G1G8C-570-MONOMER"/>
<dbReference type="GO" id="GO:0005524">
    <property type="term" value="F:ATP binding"/>
    <property type="evidence" value="ECO:0007669"/>
    <property type="project" value="UniProtKB-KW"/>
</dbReference>
<dbReference type="GO" id="GO:0004357">
    <property type="term" value="F:glutamate-cysteine ligase activity"/>
    <property type="evidence" value="ECO:0007669"/>
    <property type="project" value="UniProtKB-EC"/>
</dbReference>
<dbReference type="GO" id="GO:0042398">
    <property type="term" value="P:modified amino acid biosynthetic process"/>
    <property type="evidence" value="ECO:0007669"/>
    <property type="project" value="InterPro"/>
</dbReference>
<dbReference type="Gene3D" id="3.30.590.20">
    <property type="match status" value="1"/>
</dbReference>
<dbReference type="HAMAP" id="MF_01609">
    <property type="entry name" value="Glu_cys_ligase_2"/>
    <property type="match status" value="1"/>
</dbReference>
<dbReference type="InterPro" id="IPR050141">
    <property type="entry name" value="GCL_type2/YbdK_subfam"/>
</dbReference>
<dbReference type="InterPro" id="IPR006336">
    <property type="entry name" value="GCS2"/>
</dbReference>
<dbReference type="InterPro" id="IPR014746">
    <property type="entry name" value="Gln_synth/guanido_kin_cat_dom"/>
</dbReference>
<dbReference type="InterPro" id="IPR011793">
    <property type="entry name" value="YbdK"/>
</dbReference>
<dbReference type="NCBIfam" id="TIGR02050">
    <property type="entry name" value="gshA_cyan_rel"/>
    <property type="match status" value="1"/>
</dbReference>
<dbReference type="NCBIfam" id="NF010042">
    <property type="entry name" value="PRK13517.1-2"/>
    <property type="match status" value="1"/>
</dbReference>
<dbReference type="NCBIfam" id="NF010043">
    <property type="entry name" value="PRK13517.1-3"/>
    <property type="match status" value="1"/>
</dbReference>
<dbReference type="NCBIfam" id="NF010044">
    <property type="entry name" value="PRK13517.1-4"/>
    <property type="match status" value="1"/>
</dbReference>
<dbReference type="PANTHER" id="PTHR36510">
    <property type="entry name" value="GLUTAMATE--CYSTEINE LIGASE 2-RELATED"/>
    <property type="match status" value="1"/>
</dbReference>
<dbReference type="PANTHER" id="PTHR36510:SF1">
    <property type="entry name" value="GLUTAMATE--CYSTEINE LIGASE 2-RELATED"/>
    <property type="match status" value="1"/>
</dbReference>
<dbReference type="Pfam" id="PF04107">
    <property type="entry name" value="GCS2"/>
    <property type="match status" value="1"/>
</dbReference>
<dbReference type="SUPFAM" id="SSF55931">
    <property type="entry name" value="Glutamine synthetase/guanido kinase"/>
    <property type="match status" value="1"/>
</dbReference>
<sequence>MLSVPASSRIDFAGSPRPTVGVEWEFALVDAHTRDLSNEAATVIAEIGETPHVHKELLRNTVEVVTGICENTGEAMADLHDTLQVVRRIVRDRGMELFCAGTHPFANWSTQQLTDAPRYAELIKRTQWWGRQMLIWGVHVHVGISSAHKVMPIISSLLNQYPHLLALSASSPYWDGSDTGYASNRAMMFQQLPTAGLPFQFQSWPEFERFVHDQKKTGIIDHMNEIRWDIRPSPHLGTVEIRVFDGVSNIAELGSLVALTHCLVVDLDRRLDAGEQLPVMPPWHVQENKWRAARYGLDAEIILDADSNERLVTEDLDDLLTRLQPVARSLDCADELAGVAEIYRHGASYQRQRRVAEEHDGDLLAVVDALVAELEL</sequence>
<comment type="function">
    <text evidence="1">ATP-dependent carboxylate-amine ligase which exhibits weak glutamate--cysteine ligase activity.</text>
</comment>
<comment type="catalytic activity">
    <reaction evidence="1">
        <text>L-cysteine + L-glutamate + ATP = gamma-L-glutamyl-L-cysteine + ADP + phosphate + H(+)</text>
        <dbReference type="Rhea" id="RHEA:13285"/>
        <dbReference type="ChEBI" id="CHEBI:15378"/>
        <dbReference type="ChEBI" id="CHEBI:29985"/>
        <dbReference type="ChEBI" id="CHEBI:30616"/>
        <dbReference type="ChEBI" id="CHEBI:35235"/>
        <dbReference type="ChEBI" id="CHEBI:43474"/>
        <dbReference type="ChEBI" id="CHEBI:58173"/>
        <dbReference type="ChEBI" id="CHEBI:456216"/>
        <dbReference type="EC" id="6.3.2.2"/>
    </reaction>
</comment>
<comment type="similarity">
    <text evidence="1">Belongs to the glutamate--cysteine ligase type 2 family. YbdK subfamily.</text>
</comment>
<keyword id="KW-0067">ATP-binding</keyword>
<keyword id="KW-0436">Ligase</keyword>
<keyword id="KW-0547">Nucleotide-binding</keyword>
<name>GCS21_MYCSJ</name>